<keyword id="KW-0325">Glycoprotein</keyword>
<keyword id="KW-0472">Membrane</keyword>
<keyword id="KW-0479">Metal-binding</keyword>
<keyword id="KW-1185">Reference proteome</keyword>
<keyword id="KW-0732">Signal</keyword>
<keyword id="KW-0812">Transmembrane</keyword>
<keyword id="KW-1133">Transmembrane helix</keyword>
<keyword id="KW-0862">Zinc</keyword>
<keyword id="KW-0863">Zinc-finger</keyword>
<dbReference type="EMBL" id="BC111122">
    <property type="protein sequence ID" value="AAI11123.1"/>
    <property type="molecule type" value="mRNA"/>
</dbReference>
<dbReference type="RefSeq" id="NP_001074205.1">
    <property type="nucleotide sequence ID" value="NM_001080736.2"/>
</dbReference>
<dbReference type="SMR" id="Q2TA44"/>
<dbReference type="FunCoup" id="Q2TA44">
    <property type="interactions" value="21"/>
</dbReference>
<dbReference type="STRING" id="9913.ENSBTAP00000068752"/>
<dbReference type="GlyCosmos" id="Q2TA44">
    <property type="glycosylation" value="1 site, No reported glycans"/>
</dbReference>
<dbReference type="GlyGen" id="Q2TA44">
    <property type="glycosylation" value="1 site"/>
</dbReference>
<dbReference type="GeneID" id="538888"/>
<dbReference type="KEGG" id="bta:538888"/>
<dbReference type="CTD" id="378925"/>
<dbReference type="InParanoid" id="Q2TA44"/>
<dbReference type="OrthoDB" id="5357315at2759"/>
<dbReference type="Proteomes" id="UP000009136">
    <property type="component" value="Unplaced"/>
</dbReference>
<dbReference type="GO" id="GO:0005737">
    <property type="term" value="C:cytoplasm"/>
    <property type="evidence" value="ECO:0000318"/>
    <property type="project" value="GO_Central"/>
</dbReference>
<dbReference type="GO" id="GO:0005783">
    <property type="term" value="C:endoplasmic reticulum"/>
    <property type="evidence" value="ECO:0000318"/>
    <property type="project" value="GO_Central"/>
</dbReference>
<dbReference type="GO" id="GO:0005794">
    <property type="term" value="C:Golgi apparatus"/>
    <property type="evidence" value="ECO:0000318"/>
    <property type="project" value="GO_Central"/>
</dbReference>
<dbReference type="GO" id="GO:0005770">
    <property type="term" value="C:late endosome"/>
    <property type="evidence" value="ECO:0000318"/>
    <property type="project" value="GO_Central"/>
</dbReference>
<dbReference type="GO" id="GO:0016020">
    <property type="term" value="C:membrane"/>
    <property type="evidence" value="ECO:0007669"/>
    <property type="project" value="UniProtKB-SubCell"/>
</dbReference>
<dbReference type="GO" id="GO:0061630">
    <property type="term" value="F:ubiquitin protein ligase activity"/>
    <property type="evidence" value="ECO:0000318"/>
    <property type="project" value="GO_Central"/>
</dbReference>
<dbReference type="GO" id="GO:0008270">
    <property type="term" value="F:zinc ion binding"/>
    <property type="evidence" value="ECO:0007669"/>
    <property type="project" value="UniProtKB-KW"/>
</dbReference>
<dbReference type="GO" id="GO:0006511">
    <property type="term" value="P:ubiquitin-dependent protein catabolic process"/>
    <property type="evidence" value="ECO:0000318"/>
    <property type="project" value="GO_Central"/>
</dbReference>
<dbReference type="CDD" id="cd02122">
    <property type="entry name" value="PA_GRAIL_like"/>
    <property type="match status" value="1"/>
</dbReference>
<dbReference type="CDD" id="cd16802">
    <property type="entry name" value="RING-H2_RNF128-like"/>
    <property type="match status" value="1"/>
</dbReference>
<dbReference type="FunFam" id="3.50.30.30:FF:000003">
    <property type="entry name" value="E3 ubiquitin-protein ligase RNF128"/>
    <property type="match status" value="1"/>
</dbReference>
<dbReference type="FunFam" id="3.30.40.10:FF:000009">
    <property type="entry name" value="E3 ubiquitin-protein ligase RNF130"/>
    <property type="match status" value="1"/>
</dbReference>
<dbReference type="Gene3D" id="3.50.30.30">
    <property type="match status" value="1"/>
</dbReference>
<dbReference type="Gene3D" id="3.30.40.10">
    <property type="entry name" value="Zinc/RING finger domain, C3HC4 (zinc finger)"/>
    <property type="match status" value="1"/>
</dbReference>
<dbReference type="InterPro" id="IPR046450">
    <property type="entry name" value="PA_dom_sf"/>
</dbReference>
<dbReference type="InterPro" id="IPR003137">
    <property type="entry name" value="PA_domain"/>
</dbReference>
<dbReference type="InterPro" id="IPR051834">
    <property type="entry name" value="RING_finger_E3_ligase"/>
</dbReference>
<dbReference type="InterPro" id="IPR001841">
    <property type="entry name" value="Znf_RING"/>
</dbReference>
<dbReference type="InterPro" id="IPR013083">
    <property type="entry name" value="Znf_RING/FYVE/PHD"/>
</dbReference>
<dbReference type="PANTHER" id="PTHR45931:SF21">
    <property type="entry name" value="RING FINGER PROTEIN 130"/>
    <property type="match status" value="1"/>
</dbReference>
<dbReference type="PANTHER" id="PTHR45931">
    <property type="entry name" value="SI:CH211-59O9.10"/>
    <property type="match status" value="1"/>
</dbReference>
<dbReference type="Pfam" id="PF02225">
    <property type="entry name" value="PA"/>
    <property type="match status" value="1"/>
</dbReference>
<dbReference type="Pfam" id="PF13639">
    <property type="entry name" value="zf-RING_2"/>
    <property type="match status" value="1"/>
</dbReference>
<dbReference type="SMART" id="SM00184">
    <property type="entry name" value="RING"/>
    <property type="match status" value="1"/>
</dbReference>
<dbReference type="SUPFAM" id="SSF52025">
    <property type="entry name" value="PA domain"/>
    <property type="match status" value="1"/>
</dbReference>
<dbReference type="SUPFAM" id="SSF57850">
    <property type="entry name" value="RING/U-box"/>
    <property type="match status" value="1"/>
</dbReference>
<dbReference type="PROSITE" id="PS50089">
    <property type="entry name" value="ZF_RING_2"/>
    <property type="match status" value="1"/>
</dbReference>
<feature type="signal peptide" evidence="1">
    <location>
        <begin position="1"/>
        <end position="34"/>
    </location>
</feature>
<feature type="chain" id="PRO_0000255251" description="RING finger protein 148">
    <location>
        <begin position="35"/>
        <end position="303"/>
    </location>
</feature>
<feature type="transmembrane region" description="Helical" evidence="1">
    <location>
        <begin position="186"/>
        <end position="208"/>
    </location>
</feature>
<feature type="domain" description="PA">
    <location>
        <begin position="65"/>
        <end position="167"/>
    </location>
</feature>
<feature type="zinc finger region" description="RING-type; atypical" evidence="2">
    <location>
        <begin position="256"/>
        <end position="297"/>
    </location>
</feature>
<feature type="glycosylation site" description="N-linked (GlcNAc...) asparagine" evidence="1">
    <location>
        <position position="43"/>
    </location>
</feature>
<organism>
    <name type="scientific">Bos taurus</name>
    <name type="common">Bovine</name>
    <dbReference type="NCBI Taxonomy" id="9913"/>
    <lineage>
        <taxon>Eukaryota</taxon>
        <taxon>Metazoa</taxon>
        <taxon>Chordata</taxon>
        <taxon>Craniata</taxon>
        <taxon>Vertebrata</taxon>
        <taxon>Euteleostomi</taxon>
        <taxon>Mammalia</taxon>
        <taxon>Eutheria</taxon>
        <taxon>Laurasiatheria</taxon>
        <taxon>Artiodactyla</taxon>
        <taxon>Ruminantia</taxon>
        <taxon>Pecora</taxon>
        <taxon>Bovidae</taxon>
        <taxon>Bovinae</taxon>
        <taxon>Bos</taxon>
    </lineage>
</organism>
<name>RN148_BOVIN</name>
<comment type="subcellular location">
    <subcellularLocation>
        <location evidence="3">Membrane</location>
        <topology evidence="3">Single-pass membrane protein</topology>
    </subcellularLocation>
</comment>
<sequence>MSLLRITSSAHSSASSRLWRLGIFLLLSLPDSKGKAIWTAHLNITFQVGSRLISELGESGVFGNHSPLERVSGVVVLPEGWNQNACNPMTNFSRPGQTDPWLALIERGGCTFTRKINVAAEKGANGVIIYNYPGTGNKVFPMSHQGTENIVAVMIGNLKGMELLHLIQKGVYVKIIIEVGRMHMPWLSHYIMSLFTFLTATVAYLFLYCAWRPRGPNFSTRRQRQLKADVRKAIGKLQLRVLQEGDKELEPDEDNCVVCFDIYKPQDVVRILTCKHIFHKACIDPWLLAHRTCPMCKCDILQT</sequence>
<protein>
    <recommendedName>
        <fullName>RING finger protein 148</fullName>
    </recommendedName>
</protein>
<reference key="1">
    <citation type="submission" date="2005-12" db="EMBL/GenBank/DDBJ databases">
        <authorList>
            <consortium name="NIH - Mammalian Gene Collection (MGC) project"/>
        </authorList>
    </citation>
    <scope>NUCLEOTIDE SEQUENCE [LARGE SCALE MRNA]</scope>
    <source>
        <strain>Crossbred X Angus</strain>
        <tissue>Liver</tissue>
    </source>
</reference>
<evidence type="ECO:0000255" key="1"/>
<evidence type="ECO:0000255" key="2">
    <source>
        <dbReference type="PROSITE-ProRule" id="PRU00175"/>
    </source>
</evidence>
<evidence type="ECO:0000305" key="3"/>
<proteinExistence type="evidence at transcript level"/>
<accession>Q2TA44</accession>
<gene>
    <name type="primary">RNF148</name>
</gene>